<dbReference type="EMBL" id="CP000941">
    <property type="protein sequence ID" value="ACA13045.1"/>
    <property type="molecule type" value="Genomic_DNA"/>
</dbReference>
<dbReference type="RefSeq" id="WP_004084685.1">
    <property type="nucleotide sequence ID" value="NC_010513.1"/>
</dbReference>
<dbReference type="SMR" id="B0U5X3"/>
<dbReference type="KEGG" id="xfm:Xfasm12_2192"/>
<dbReference type="HOGENOM" id="CLU_002794_4_1_6"/>
<dbReference type="GO" id="GO:0005737">
    <property type="term" value="C:cytoplasm"/>
    <property type="evidence" value="ECO:0007669"/>
    <property type="project" value="UniProtKB-SubCell"/>
</dbReference>
<dbReference type="GO" id="GO:0005525">
    <property type="term" value="F:GTP binding"/>
    <property type="evidence" value="ECO:0007669"/>
    <property type="project" value="UniProtKB-UniRule"/>
</dbReference>
<dbReference type="GO" id="GO:0003924">
    <property type="term" value="F:GTPase activity"/>
    <property type="evidence" value="ECO:0007669"/>
    <property type="project" value="InterPro"/>
</dbReference>
<dbReference type="GO" id="GO:0097216">
    <property type="term" value="F:guanosine tetraphosphate binding"/>
    <property type="evidence" value="ECO:0007669"/>
    <property type="project" value="UniProtKB-ARBA"/>
</dbReference>
<dbReference type="GO" id="GO:0003746">
    <property type="term" value="F:translation elongation factor activity"/>
    <property type="evidence" value="ECO:0007669"/>
    <property type="project" value="UniProtKB-UniRule"/>
</dbReference>
<dbReference type="GO" id="GO:0032790">
    <property type="term" value="P:ribosome disassembly"/>
    <property type="evidence" value="ECO:0007669"/>
    <property type="project" value="TreeGrafter"/>
</dbReference>
<dbReference type="CDD" id="cd01886">
    <property type="entry name" value="EF-G"/>
    <property type="match status" value="1"/>
</dbReference>
<dbReference type="CDD" id="cd16262">
    <property type="entry name" value="EFG_III"/>
    <property type="match status" value="1"/>
</dbReference>
<dbReference type="CDD" id="cd01434">
    <property type="entry name" value="EFG_mtEFG1_IV"/>
    <property type="match status" value="1"/>
</dbReference>
<dbReference type="CDD" id="cd03713">
    <property type="entry name" value="EFG_mtEFG_C"/>
    <property type="match status" value="1"/>
</dbReference>
<dbReference type="CDD" id="cd04088">
    <property type="entry name" value="EFG_mtEFG_II"/>
    <property type="match status" value="1"/>
</dbReference>
<dbReference type="FunFam" id="2.40.30.10:FF:000006">
    <property type="entry name" value="Elongation factor G"/>
    <property type="match status" value="1"/>
</dbReference>
<dbReference type="FunFam" id="3.30.230.10:FF:000003">
    <property type="entry name" value="Elongation factor G"/>
    <property type="match status" value="1"/>
</dbReference>
<dbReference type="FunFam" id="3.30.70.240:FF:000001">
    <property type="entry name" value="Elongation factor G"/>
    <property type="match status" value="1"/>
</dbReference>
<dbReference type="FunFam" id="3.30.70.870:FF:000001">
    <property type="entry name" value="Elongation factor G"/>
    <property type="match status" value="1"/>
</dbReference>
<dbReference type="FunFam" id="3.40.50.300:FF:000029">
    <property type="entry name" value="Elongation factor G"/>
    <property type="match status" value="1"/>
</dbReference>
<dbReference type="Gene3D" id="3.30.230.10">
    <property type="match status" value="1"/>
</dbReference>
<dbReference type="Gene3D" id="3.30.70.240">
    <property type="match status" value="1"/>
</dbReference>
<dbReference type="Gene3D" id="3.30.70.870">
    <property type="entry name" value="Elongation Factor G (Translational Gtpase), domain 3"/>
    <property type="match status" value="1"/>
</dbReference>
<dbReference type="Gene3D" id="3.40.50.300">
    <property type="entry name" value="P-loop containing nucleotide triphosphate hydrolases"/>
    <property type="match status" value="1"/>
</dbReference>
<dbReference type="Gene3D" id="2.40.30.10">
    <property type="entry name" value="Translation factors"/>
    <property type="match status" value="1"/>
</dbReference>
<dbReference type="HAMAP" id="MF_00054_B">
    <property type="entry name" value="EF_G_EF_2_B"/>
    <property type="match status" value="1"/>
</dbReference>
<dbReference type="InterPro" id="IPR041095">
    <property type="entry name" value="EFG_II"/>
</dbReference>
<dbReference type="InterPro" id="IPR009022">
    <property type="entry name" value="EFG_III"/>
</dbReference>
<dbReference type="InterPro" id="IPR035647">
    <property type="entry name" value="EFG_III/V"/>
</dbReference>
<dbReference type="InterPro" id="IPR047872">
    <property type="entry name" value="EFG_IV"/>
</dbReference>
<dbReference type="InterPro" id="IPR035649">
    <property type="entry name" value="EFG_V"/>
</dbReference>
<dbReference type="InterPro" id="IPR000640">
    <property type="entry name" value="EFG_V-like"/>
</dbReference>
<dbReference type="InterPro" id="IPR004161">
    <property type="entry name" value="EFTu-like_2"/>
</dbReference>
<dbReference type="InterPro" id="IPR031157">
    <property type="entry name" value="G_TR_CS"/>
</dbReference>
<dbReference type="InterPro" id="IPR027417">
    <property type="entry name" value="P-loop_NTPase"/>
</dbReference>
<dbReference type="InterPro" id="IPR020568">
    <property type="entry name" value="Ribosomal_Su5_D2-typ_SF"/>
</dbReference>
<dbReference type="InterPro" id="IPR014721">
    <property type="entry name" value="Ribsml_uS5_D2-typ_fold_subgr"/>
</dbReference>
<dbReference type="InterPro" id="IPR005225">
    <property type="entry name" value="Small_GTP-bd"/>
</dbReference>
<dbReference type="InterPro" id="IPR000795">
    <property type="entry name" value="T_Tr_GTP-bd_dom"/>
</dbReference>
<dbReference type="InterPro" id="IPR009000">
    <property type="entry name" value="Transl_B-barrel_sf"/>
</dbReference>
<dbReference type="InterPro" id="IPR004540">
    <property type="entry name" value="Transl_elong_EFG/EF2"/>
</dbReference>
<dbReference type="InterPro" id="IPR005517">
    <property type="entry name" value="Transl_elong_EFG/EF2_IV"/>
</dbReference>
<dbReference type="NCBIfam" id="TIGR00484">
    <property type="entry name" value="EF-G"/>
    <property type="match status" value="1"/>
</dbReference>
<dbReference type="NCBIfam" id="NF009381">
    <property type="entry name" value="PRK12740.1-5"/>
    <property type="match status" value="1"/>
</dbReference>
<dbReference type="NCBIfam" id="TIGR00231">
    <property type="entry name" value="small_GTP"/>
    <property type="match status" value="1"/>
</dbReference>
<dbReference type="PANTHER" id="PTHR43261:SF1">
    <property type="entry name" value="RIBOSOME-RELEASING FACTOR 2, MITOCHONDRIAL"/>
    <property type="match status" value="1"/>
</dbReference>
<dbReference type="PANTHER" id="PTHR43261">
    <property type="entry name" value="TRANSLATION ELONGATION FACTOR G-RELATED"/>
    <property type="match status" value="1"/>
</dbReference>
<dbReference type="Pfam" id="PF00679">
    <property type="entry name" value="EFG_C"/>
    <property type="match status" value="1"/>
</dbReference>
<dbReference type="Pfam" id="PF14492">
    <property type="entry name" value="EFG_III"/>
    <property type="match status" value="1"/>
</dbReference>
<dbReference type="Pfam" id="PF03764">
    <property type="entry name" value="EFG_IV"/>
    <property type="match status" value="1"/>
</dbReference>
<dbReference type="Pfam" id="PF00009">
    <property type="entry name" value="GTP_EFTU"/>
    <property type="match status" value="1"/>
</dbReference>
<dbReference type="Pfam" id="PF03144">
    <property type="entry name" value="GTP_EFTU_D2"/>
    <property type="match status" value="1"/>
</dbReference>
<dbReference type="PRINTS" id="PR00315">
    <property type="entry name" value="ELONGATNFCT"/>
</dbReference>
<dbReference type="SMART" id="SM00838">
    <property type="entry name" value="EFG_C"/>
    <property type="match status" value="1"/>
</dbReference>
<dbReference type="SMART" id="SM00889">
    <property type="entry name" value="EFG_IV"/>
    <property type="match status" value="1"/>
</dbReference>
<dbReference type="SUPFAM" id="SSF54980">
    <property type="entry name" value="EF-G C-terminal domain-like"/>
    <property type="match status" value="2"/>
</dbReference>
<dbReference type="SUPFAM" id="SSF52540">
    <property type="entry name" value="P-loop containing nucleoside triphosphate hydrolases"/>
    <property type="match status" value="1"/>
</dbReference>
<dbReference type="SUPFAM" id="SSF54211">
    <property type="entry name" value="Ribosomal protein S5 domain 2-like"/>
    <property type="match status" value="1"/>
</dbReference>
<dbReference type="SUPFAM" id="SSF50447">
    <property type="entry name" value="Translation proteins"/>
    <property type="match status" value="1"/>
</dbReference>
<dbReference type="PROSITE" id="PS00301">
    <property type="entry name" value="G_TR_1"/>
    <property type="match status" value="1"/>
</dbReference>
<dbReference type="PROSITE" id="PS51722">
    <property type="entry name" value="G_TR_2"/>
    <property type="match status" value="1"/>
</dbReference>
<keyword id="KW-0963">Cytoplasm</keyword>
<keyword id="KW-0251">Elongation factor</keyword>
<keyword id="KW-0342">GTP-binding</keyword>
<keyword id="KW-0547">Nucleotide-binding</keyword>
<keyword id="KW-0648">Protein biosynthesis</keyword>
<proteinExistence type="inferred from homology"/>
<evidence type="ECO:0000255" key="1">
    <source>
        <dbReference type="HAMAP-Rule" id="MF_00054"/>
    </source>
</evidence>
<organism>
    <name type="scientific">Xylella fastidiosa (strain M12)</name>
    <dbReference type="NCBI Taxonomy" id="405440"/>
    <lineage>
        <taxon>Bacteria</taxon>
        <taxon>Pseudomonadati</taxon>
        <taxon>Pseudomonadota</taxon>
        <taxon>Gammaproteobacteria</taxon>
        <taxon>Lysobacterales</taxon>
        <taxon>Lysobacteraceae</taxon>
        <taxon>Xylella</taxon>
    </lineage>
</organism>
<feature type="chain" id="PRO_1000091783" description="Elongation factor G">
    <location>
        <begin position="1"/>
        <end position="705"/>
    </location>
</feature>
<feature type="domain" description="tr-type G">
    <location>
        <begin position="8"/>
        <end position="290"/>
    </location>
</feature>
<feature type="binding site" evidence="1">
    <location>
        <begin position="17"/>
        <end position="24"/>
    </location>
    <ligand>
        <name>GTP</name>
        <dbReference type="ChEBI" id="CHEBI:37565"/>
    </ligand>
</feature>
<feature type="binding site" evidence="1">
    <location>
        <begin position="88"/>
        <end position="92"/>
    </location>
    <ligand>
        <name>GTP</name>
        <dbReference type="ChEBI" id="CHEBI:37565"/>
    </ligand>
</feature>
<feature type="binding site" evidence="1">
    <location>
        <begin position="142"/>
        <end position="145"/>
    </location>
    <ligand>
        <name>GTP</name>
        <dbReference type="ChEBI" id="CHEBI:37565"/>
    </ligand>
</feature>
<accession>B0U5X3</accession>
<reference key="1">
    <citation type="journal article" date="2010" name="J. Bacteriol.">
        <title>Whole genome sequences of two Xylella fastidiosa strains (M12 and M23) causing almond leaf scorch disease in California.</title>
        <authorList>
            <person name="Chen J."/>
            <person name="Xie G."/>
            <person name="Han S."/>
            <person name="Chertkov O."/>
            <person name="Sims D."/>
            <person name="Civerolo E.L."/>
        </authorList>
    </citation>
    <scope>NUCLEOTIDE SEQUENCE [LARGE SCALE GENOMIC DNA]</scope>
    <source>
        <strain>M12</strain>
    </source>
</reference>
<sequence length="705" mass="78114">MVRATPIHRYRNIGIMAHIDAGKTTTSERILFYAGVCHQMGEVHDGAAVMDWMEQEQERGITITSAATTVFWSGMDKSMPQHRFNIIDTPGHVDFTIEVERSLRVLDGAVFVLCAVGGVQPQSETVWRQANKYFVPRMAFVNKMDRTGANFDKVVEQLKARLGAYPVPMQVPIGAEDGFEGVIDLLKMKAIHWDAASQGTVFEYRDIPIELVDKASKARAFMVEAAAEATEELMDKYLNEGELKEQEILEGLRERTLKVEIIPVFCGSAFKNKGVQAMLDGVIHLLPSPADRPPVQGLDEKGNECRCKASDSEPFSALAFKIMTDPFVGSLTFFRVYSGVLNSGDQVYNSVKLKKERVGRILQMHSNQRDEIKEVRAGDIAAAVGLKDVTTGDTLCDQNHIIILERMIFPEPVISMAVEPKTKSDQEKMGMALGRLAQEDPSFRVKTDEESGQTIISGMGELHLDIIVDRMRREFNVEANVGKPQVAYRETIRKSDVKSDYKHVKQSGGKGQYGHVVIEISPMSDVDKQHPDVKGDFLFINEITGGVIPKEFISPIEKGLRETITSGPLAGFPVVGVKVKLVFGSYHDVDSSEMAFKLAASMAFKQGFAKANPVLLEPIMKVEIVSPEDYLGDIMGDVSRRRGILQGQDDSLSGKVINAMIPLGEMFGYATSLRSMTQGRATFAMEFDHYEEAPTNIADTVIKKT</sequence>
<comment type="function">
    <text evidence="1">Catalyzes the GTP-dependent ribosomal translocation step during translation elongation. During this step, the ribosome changes from the pre-translocational (PRE) to the post-translocational (POST) state as the newly formed A-site-bound peptidyl-tRNA and P-site-bound deacylated tRNA move to the P and E sites, respectively. Catalyzes the coordinated movement of the two tRNA molecules, the mRNA and conformational changes in the ribosome.</text>
</comment>
<comment type="subcellular location">
    <subcellularLocation>
        <location evidence="1">Cytoplasm</location>
    </subcellularLocation>
</comment>
<comment type="similarity">
    <text evidence="1">Belongs to the TRAFAC class translation factor GTPase superfamily. Classic translation factor GTPase family. EF-G/EF-2 subfamily.</text>
</comment>
<gene>
    <name evidence="1" type="primary">fusA</name>
    <name type="ordered locus">Xfasm12_2192</name>
</gene>
<name>EFG_XYLFM</name>
<protein>
    <recommendedName>
        <fullName evidence="1">Elongation factor G</fullName>
        <shortName evidence="1">EF-G</shortName>
    </recommendedName>
</protein>